<gene>
    <name type="primary">KXD1</name>
    <name type="ORF">AWRI1631_71720</name>
</gene>
<evidence type="ECO:0000250" key="1"/>
<evidence type="ECO:0000255" key="2"/>
<evidence type="ECO:0000256" key="3">
    <source>
        <dbReference type="SAM" id="MobiDB-lite"/>
    </source>
</evidence>
<evidence type="ECO:0000305" key="4"/>
<feature type="chain" id="PRO_0000410671" description="Biogenesis of lysosome-related organelles complex 1 subunit KXD1">
    <location>
        <begin position="1"/>
        <end position="218"/>
    </location>
</feature>
<feature type="region of interest" description="Disordered" evidence="3">
    <location>
        <begin position="1"/>
        <end position="65"/>
    </location>
</feature>
<feature type="coiled-coil region" evidence="2">
    <location>
        <begin position="142"/>
        <end position="192"/>
    </location>
</feature>
<feature type="compositionally biased region" description="Polar residues" evidence="3">
    <location>
        <begin position="17"/>
        <end position="30"/>
    </location>
</feature>
<feature type="compositionally biased region" description="Low complexity" evidence="3">
    <location>
        <begin position="39"/>
        <end position="65"/>
    </location>
</feature>
<protein>
    <recommendedName>
        <fullName>Biogenesis of lysosome-related organelles complex 1 subunit KXD1</fullName>
        <shortName>BLOC-1 subunit KXD1</shortName>
    </recommendedName>
    <alternativeName>
        <fullName>KxDL homolog</fullName>
    </alternativeName>
</protein>
<keyword id="KW-0175">Coiled coil</keyword>
<keyword id="KW-0967">Endosome</keyword>
<keyword id="KW-0813">Transport</keyword>
<name>KXD1_YEAS6</name>
<accession>B5VIP5</accession>
<organism>
    <name type="scientific">Saccharomyces cerevisiae (strain AWRI1631)</name>
    <name type="common">Baker's yeast</name>
    <dbReference type="NCBI Taxonomy" id="545124"/>
    <lineage>
        <taxon>Eukaryota</taxon>
        <taxon>Fungi</taxon>
        <taxon>Dikarya</taxon>
        <taxon>Ascomycota</taxon>
        <taxon>Saccharomycotina</taxon>
        <taxon>Saccharomycetes</taxon>
        <taxon>Saccharomycetales</taxon>
        <taxon>Saccharomycetaceae</taxon>
        <taxon>Saccharomyces</taxon>
    </lineage>
</organism>
<proteinExistence type="inferred from homology"/>
<comment type="function">
    <text evidence="1">Component of the biogenesis of lysosome-related organelles complex-1 (BLOC-1) involved in endosomal cargo sorting.</text>
</comment>
<comment type="subunit">
    <text evidence="1">Component of the biogenesis of lysosome-related organelles complex-1 (BLOC-1) composed of at least BLI1, BLS1, CNL1, KXD1, SNN1 and VAB2.</text>
</comment>
<comment type="subcellular location">
    <subcellularLocation>
        <location evidence="1">Endosome</location>
    </subcellularLocation>
</comment>
<comment type="similarity">
    <text evidence="4">Belongs to the KXD1 family.</text>
</comment>
<reference key="1">
    <citation type="journal article" date="2008" name="FEMS Yeast Res.">
        <title>Comparative genome analysis of a Saccharomyces cerevisiae wine strain.</title>
        <authorList>
            <person name="Borneman A.R."/>
            <person name="Forgan A.H."/>
            <person name="Pretorius I.S."/>
            <person name="Chambers P.J."/>
        </authorList>
    </citation>
    <scope>NUCLEOTIDE SEQUENCE [LARGE SCALE GENOMIC DNA]</scope>
    <source>
        <strain>AWRI1631</strain>
    </source>
</reference>
<sequence>MVTGISEENDDEETFSAVHSSTPSINSQSYAIPITEEMSSSFHDSISTTSNSSGSFDSDGSNVSDVVEQNEMDNESNVDEDLFLDNDIPQSSNLLPTDAQDPGPIFDVSRYIFDSLKQSIDSADFSEALSLQTKTSAVINSKSLELKQYIDEMKSRLTQLQEKFENGEATSKKIKRDLETSRKNIDYLNAALRVDFPIEFNQAREKILERRLNEDHDC</sequence>
<dbReference type="EMBL" id="ABSV01000882">
    <property type="protein sequence ID" value="EDZ72197.1"/>
    <property type="molecule type" value="Genomic_DNA"/>
</dbReference>
<dbReference type="SMR" id="B5VIP5"/>
<dbReference type="Proteomes" id="UP000008988">
    <property type="component" value="Unassembled WGS sequence"/>
</dbReference>
<dbReference type="GO" id="GO:0031083">
    <property type="term" value="C:BLOC-1 complex"/>
    <property type="evidence" value="ECO:0007669"/>
    <property type="project" value="TreeGrafter"/>
</dbReference>
<dbReference type="GO" id="GO:0005768">
    <property type="term" value="C:endosome"/>
    <property type="evidence" value="ECO:0007669"/>
    <property type="project" value="UniProtKB-SubCell"/>
</dbReference>
<dbReference type="GO" id="GO:0007032">
    <property type="term" value="P:endosome organization"/>
    <property type="evidence" value="ECO:0007669"/>
    <property type="project" value="TreeGrafter"/>
</dbReference>
<dbReference type="GO" id="GO:0032880">
    <property type="term" value="P:regulation of protein localization"/>
    <property type="evidence" value="ECO:0007669"/>
    <property type="project" value="TreeGrafter"/>
</dbReference>
<dbReference type="InterPro" id="IPR051390">
    <property type="entry name" value="BLOC-1_subunit_KXD1"/>
</dbReference>
<dbReference type="InterPro" id="IPR019371">
    <property type="entry name" value="KxDL_dom"/>
</dbReference>
<dbReference type="PANTHER" id="PTHR37787">
    <property type="entry name" value="BIOGENESIS OF LYSOSOME-RELATED ORGANELLES COMPLEX 1 SUBUNIT KXD1"/>
    <property type="match status" value="1"/>
</dbReference>
<dbReference type="PANTHER" id="PTHR37787:SF1">
    <property type="entry name" value="BIOGENESIS OF LYSOSOME-RELATED ORGANELLES COMPLEX 1 SUBUNIT KXD1"/>
    <property type="match status" value="1"/>
</dbReference>
<dbReference type="Pfam" id="PF10241">
    <property type="entry name" value="KxDL"/>
    <property type="match status" value="1"/>
</dbReference>